<organism>
    <name type="scientific">Zymoseptoria tritici (strain CBS 115943 / IPO323)</name>
    <name type="common">Speckled leaf blotch fungus</name>
    <name type="synonym">Septoria tritici</name>
    <dbReference type="NCBI Taxonomy" id="336722"/>
    <lineage>
        <taxon>Eukaryota</taxon>
        <taxon>Fungi</taxon>
        <taxon>Dikarya</taxon>
        <taxon>Ascomycota</taxon>
        <taxon>Pezizomycotina</taxon>
        <taxon>Dothideomycetes</taxon>
        <taxon>Dothideomycetidae</taxon>
        <taxon>Mycosphaerellales</taxon>
        <taxon>Mycosphaerellaceae</taxon>
        <taxon>Zymoseptoria</taxon>
    </lineage>
</organism>
<dbReference type="EMBL" id="CM001199">
    <property type="protein sequence ID" value="EGP87768.1"/>
    <property type="molecule type" value="Genomic_DNA"/>
</dbReference>
<dbReference type="RefSeq" id="XP_003852792.1">
    <property type="nucleotide sequence ID" value="XM_003852744.1"/>
</dbReference>
<dbReference type="SMR" id="F9X9V4"/>
<dbReference type="EnsemblFungi" id="Mycgr3T41235">
    <property type="protein sequence ID" value="Mycgr3P41235"/>
    <property type="gene ID" value="Mycgr3G41235"/>
</dbReference>
<dbReference type="GeneID" id="13397113"/>
<dbReference type="KEGG" id="ztr:MYCGRDRAFT_41235"/>
<dbReference type="eggNOG" id="KOG0054">
    <property type="taxonomic scope" value="Eukaryota"/>
</dbReference>
<dbReference type="HOGENOM" id="CLU_000604_27_1_1"/>
<dbReference type="InParanoid" id="F9X9V4"/>
<dbReference type="OMA" id="HYAYNIE"/>
<dbReference type="OrthoDB" id="6500128at2759"/>
<dbReference type="Proteomes" id="UP000008062">
    <property type="component" value="Chromosome 4"/>
</dbReference>
<dbReference type="GO" id="GO:0005886">
    <property type="term" value="C:plasma membrane"/>
    <property type="evidence" value="ECO:0007669"/>
    <property type="project" value="UniProtKB-SubCell"/>
</dbReference>
<dbReference type="GO" id="GO:0140359">
    <property type="term" value="F:ABC-type transporter activity"/>
    <property type="evidence" value="ECO:0007669"/>
    <property type="project" value="InterPro"/>
</dbReference>
<dbReference type="GO" id="GO:0005524">
    <property type="term" value="F:ATP binding"/>
    <property type="evidence" value="ECO:0007669"/>
    <property type="project" value="UniProtKB-KW"/>
</dbReference>
<dbReference type="GO" id="GO:0016887">
    <property type="term" value="F:ATP hydrolysis activity"/>
    <property type="evidence" value="ECO:0007669"/>
    <property type="project" value="InterPro"/>
</dbReference>
<dbReference type="CDD" id="cd18597">
    <property type="entry name" value="ABC_6TM_YOR1_D1_like"/>
    <property type="match status" value="1"/>
</dbReference>
<dbReference type="CDD" id="cd18606">
    <property type="entry name" value="ABC_6TM_YOR1_D2_like"/>
    <property type="match status" value="1"/>
</dbReference>
<dbReference type="CDD" id="cd03250">
    <property type="entry name" value="ABCC_MRP_domain1"/>
    <property type="match status" value="1"/>
</dbReference>
<dbReference type="CDD" id="cd03244">
    <property type="entry name" value="ABCC_MRP_domain2"/>
    <property type="match status" value="1"/>
</dbReference>
<dbReference type="FunFam" id="3.40.50.300:FF:000630">
    <property type="entry name" value="ATP-binding cassette (ABC) transporter, putative"/>
    <property type="match status" value="1"/>
</dbReference>
<dbReference type="FunFam" id="1.20.1560.10:FF:000010">
    <property type="entry name" value="Multidrug resistance-associated ABC transporter"/>
    <property type="match status" value="1"/>
</dbReference>
<dbReference type="FunFam" id="3.40.50.300:FF:000997">
    <property type="entry name" value="Multidrug resistance-associated protein 1"/>
    <property type="match status" value="1"/>
</dbReference>
<dbReference type="Gene3D" id="1.20.1560.10">
    <property type="entry name" value="ABC transporter type 1, transmembrane domain"/>
    <property type="match status" value="2"/>
</dbReference>
<dbReference type="Gene3D" id="3.40.50.300">
    <property type="entry name" value="P-loop containing nucleotide triphosphate hydrolases"/>
    <property type="match status" value="2"/>
</dbReference>
<dbReference type="InterPro" id="IPR003593">
    <property type="entry name" value="AAA+_ATPase"/>
</dbReference>
<dbReference type="InterPro" id="IPR011527">
    <property type="entry name" value="ABC1_TM_dom"/>
</dbReference>
<dbReference type="InterPro" id="IPR036640">
    <property type="entry name" value="ABC1_TM_sf"/>
</dbReference>
<dbReference type="InterPro" id="IPR003439">
    <property type="entry name" value="ABC_transporter-like_ATP-bd"/>
</dbReference>
<dbReference type="InterPro" id="IPR017871">
    <property type="entry name" value="ABC_transporter-like_CS"/>
</dbReference>
<dbReference type="InterPro" id="IPR050173">
    <property type="entry name" value="ABC_transporter_C-like"/>
</dbReference>
<dbReference type="InterPro" id="IPR027417">
    <property type="entry name" value="P-loop_NTPase"/>
</dbReference>
<dbReference type="PANTHER" id="PTHR24223">
    <property type="entry name" value="ATP-BINDING CASSETTE SUB-FAMILY C"/>
    <property type="match status" value="1"/>
</dbReference>
<dbReference type="PANTHER" id="PTHR24223:SF456">
    <property type="entry name" value="MULTIDRUG RESISTANCE-ASSOCIATED PROTEIN LETHAL(2)03659"/>
    <property type="match status" value="1"/>
</dbReference>
<dbReference type="Pfam" id="PF00664">
    <property type="entry name" value="ABC_membrane"/>
    <property type="match status" value="2"/>
</dbReference>
<dbReference type="Pfam" id="PF00005">
    <property type="entry name" value="ABC_tran"/>
    <property type="match status" value="2"/>
</dbReference>
<dbReference type="SMART" id="SM00382">
    <property type="entry name" value="AAA"/>
    <property type="match status" value="2"/>
</dbReference>
<dbReference type="SUPFAM" id="SSF90123">
    <property type="entry name" value="ABC transporter transmembrane region"/>
    <property type="match status" value="2"/>
</dbReference>
<dbReference type="SUPFAM" id="SSF52540">
    <property type="entry name" value="P-loop containing nucleoside triphosphate hydrolases"/>
    <property type="match status" value="2"/>
</dbReference>
<dbReference type="PROSITE" id="PS50929">
    <property type="entry name" value="ABC_TM1F"/>
    <property type="match status" value="2"/>
</dbReference>
<dbReference type="PROSITE" id="PS00211">
    <property type="entry name" value="ABC_TRANSPORTER_1"/>
    <property type="match status" value="2"/>
</dbReference>
<dbReference type="PROSITE" id="PS50893">
    <property type="entry name" value="ABC_TRANSPORTER_2"/>
    <property type="match status" value="2"/>
</dbReference>
<sequence length="1353" mass="148040">MSKSLAYPPRKWYRRVPFLSDKSSLTLLDSNGNRKITPEASASLWNWFFFSWLNPLIAIGYSRPHIQSELYLLPPSSDVSVYAGKLDGHIEGLRERVPEGGGKRRRFNFHSPSWRLARALNASVLVWFWVGGAMKLFADVATITSPLLVRAIIRFLQTSEQNRKAGLPEPSIGQGFGMAIGLALLLASGVMANVHGFYRSYTSGILLRSALIDSLFRRTSAFSPLERAKHNLETSRIISMISTDVSRIDFACGYFHATWTSVIQILICLGLTIASLGPAALTGFGLMAILVPSQNYIVKYLFLLRKRSMPFTDARLSAISEALASIRLVKVYAWESALLSKISFLRRSELKLLRSRLLLRAVNVALSFSVPTLAAVVSFVTYAALGNELDAAEVFSALTLFMLLRTPLLLLPVAFGAAADGANAIQRLAGAFDAPMPDHGLPIDGDIEAAVEVKDATVSYRVQDHSDEKSEKQTSSFQLTNLTVHINRGELFMIVGPVGAGKSTFLGSLVGETRLETGHAVLGSRAAYAPQQAWLKSGSIRENIVFGRPWNPDRYNSVLSACCLTQDLSTFPSGDETMIGENGISLSGGQRQRVALARTIYEPSPLLLLDDVFSALDAHVQSEVVQKVVLERDPGTTLVLVTHSLHLLRHADRICCLNEGRVEEMGSFAELMGKEGGQMRRVVEEFASKSSAEEEEVEDGDLKDGVPSTDGGDASQTTSNKAMMQTEERFIGSVTARTYASYIRAGKPAFTLTFFILSMLIFQGGSILSPLWLQWWQEGRFPTLSSGTYMGVYAALGVSQAIGLLAMSSIFGFFIFYSACQIHADAIRSVLYAPISFFDTTPLGRITHRFSKDIDAIDNVIGEAFRMLLSTVAQVVGAVVLISIILPWFLLAVFVIVILYILTGMYYRPTARELRRLDALTRSPIYEHVSESLNGIMVIRSLGALQTTLDRNRENLNTENSPYWLSVACQRWLSVRLDLLGTCLVLLVGLIVVGSRSSISAAQGGVALSYIVTVQAVFGFMIRQSAEIENNMNAIERLLYYSHDVPQEPPHKREGDVGLVEKKWPGQGAIEMRDVVFTHREGLEPSLRGVNLVIPAGCRLALVGRTGSGKSTMLAALVGMGEITAGTIMVDGVDVSTIGLNLLRKRIAFMPQEAAVLSGTLRYNLDPFGEHDDADLWRVMHQVGLSSISAQSSAETLTSSDQEKSSPDDAAISPSSHSHSQHLTLDTPIHAERSDLSSGQRSLISLARALIKDASIFVLDEATASMDMELDHRLQRVLRENLRGKTTIVIAHRLDSVVGSSDLICVMDEGRVAQCGSPMDLFGEEGGHFRSLCSDAGLGELDLVEARRRFVSS</sequence>
<gene>
    <name type="ORF">MYCGRDRAFT_41235</name>
</gene>
<keyword id="KW-0067">ATP-binding</keyword>
<keyword id="KW-1003">Cell membrane</keyword>
<keyword id="KW-0325">Glycoprotein</keyword>
<keyword id="KW-0472">Membrane</keyword>
<keyword id="KW-0547">Nucleotide-binding</keyword>
<keyword id="KW-1185">Reference proteome</keyword>
<keyword id="KW-0812">Transmembrane</keyword>
<keyword id="KW-1133">Transmembrane helix</keyword>
<keyword id="KW-0813">Transport</keyword>
<feature type="chain" id="PRO_0000451095" description="ABC-type transporter MYCGRDRAFT_41235">
    <location>
        <begin position="1"/>
        <end position="1353"/>
    </location>
</feature>
<feature type="transmembrane region" description="Helical" evidence="1">
    <location>
        <begin position="40"/>
        <end position="60"/>
    </location>
</feature>
<feature type="transmembrane region" description="Helical" evidence="1 3">
    <location>
        <begin position="124"/>
        <end position="144"/>
    </location>
</feature>
<feature type="transmembrane region" description="Helical" evidence="1 3">
    <location>
        <begin position="172"/>
        <end position="192"/>
    </location>
</feature>
<feature type="transmembrane region" description="Helical" evidence="1 3">
    <location>
        <begin position="250"/>
        <end position="270"/>
    </location>
</feature>
<feature type="transmembrane region" description="Helical" evidence="1 3">
    <location>
        <begin position="271"/>
        <end position="291"/>
    </location>
</feature>
<feature type="transmembrane region" description="Helical" evidence="1 3">
    <location>
        <begin position="364"/>
        <end position="384"/>
    </location>
</feature>
<feature type="transmembrane region" description="Helical" evidence="1 3">
    <location>
        <begin position="397"/>
        <end position="417"/>
    </location>
</feature>
<feature type="transmembrane region" description="Helical" evidence="1 3">
    <location>
        <begin position="748"/>
        <end position="768"/>
    </location>
</feature>
<feature type="transmembrane region" description="Helical" evidence="1 3">
    <location>
        <begin position="796"/>
        <end position="816"/>
    </location>
</feature>
<feature type="transmembrane region" description="Helical" evidence="1 3">
    <location>
        <begin position="864"/>
        <end position="882"/>
    </location>
</feature>
<feature type="transmembrane region" description="Helical" evidence="1 3">
    <location>
        <begin position="888"/>
        <end position="907"/>
    </location>
</feature>
<feature type="transmembrane region" description="Helical" evidence="1 3">
    <location>
        <begin position="973"/>
        <end position="993"/>
    </location>
</feature>
<feature type="transmembrane region" description="Helical" evidence="1 3">
    <location>
        <begin position="1002"/>
        <end position="1022"/>
    </location>
</feature>
<feature type="domain" description="ABC transmembrane type-1 1" evidence="3">
    <location>
        <begin position="129"/>
        <end position="420"/>
    </location>
</feature>
<feature type="domain" description="ABC transporter 1" evidence="2">
    <location>
        <begin position="460"/>
        <end position="684"/>
    </location>
</feature>
<feature type="domain" description="ABC transmembrane type-1 2" evidence="3">
    <location>
        <begin position="756"/>
        <end position="1030"/>
    </location>
</feature>
<feature type="domain" description="ABC transporter 2" evidence="2">
    <location>
        <begin position="1070"/>
        <end position="1334"/>
    </location>
</feature>
<feature type="region of interest" description="Disordered" evidence="5">
    <location>
        <begin position="687"/>
        <end position="720"/>
    </location>
</feature>
<feature type="region of interest" description="Disordered" evidence="5">
    <location>
        <begin position="1191"/>
        <end position="1223"/>
    </location>
</feature>
<feature type="compositionally biased region" description="Polar residues" evidence="5">
    <location>
        <begin position="1191"/>
        <end position="1200"/>
    </location>
</feature>
<feature type="compositionally biased region" description="Low complexity" evidence="5">
    <location>
        <begin position="1208"/>
        <end position="1218"/>
    </location>
</feature>
<feature type="binding site" evidence="2">
    <location>
        <begin position="496"/>
        <end position="503"/>
    </location>
    <ligand>
        <name>ATP</name>
        <dbReference type="ChEBI" id="CHEBI:30616"/>
    </ligand>
</feature>
<feature type="binding site" evidence="2">
    <location>
        <begin position="1104"/>
        <end position="1111"/>
    </location>
    <ligand>
        <name>ATP</name>
        <dbReference type="ChEBI" id="CHEBI:30616"/>
    </ligand>
</feature>
<feature type="glycosylation site" description="N-linked (GlcNAc...) asparagine" evidence="4">
    <location>
        <position position="121"/>
    </location>
</feature>
<feature type="glycosylation site" description="N-linked (GlcNAc...) asparagine" evidence="4">
    <location>
        <position position="481"/>
    </location>
</feature>
<reference key="1">
    <citation type="journal article" date="2011" name="PLoS Genet.">
        <title>Finished genome of the fungal wheat pathogen Mycosphaerella graminicola reveals dispensome structure, chromosome plasticity, and stealth pathogenesis.</title>
        <authorList>
            <person name="Goodwin S.B."/>
            <person name="Ben M'barek S."/>
            <person name="Dhillon B."/>
            <person name="Wittenberg A.H.J."/>
            <person name="Crane C.F."/>
            <person name="Hane J.K."/>
            <person name="Foster A.J."/>
            <person name="Van der Lee T.A.J."/>
            <person name="Grimwood J."/>
            <person name="Aerts A."/>
            <person name="Antoniw J."/>
            <person name="Bailey A."/>
            <person name="Bluhm B."/>
            <person name="Bowler J."/>
            <person name="Bristow J."/>
            <person name="van der Burgt A."/>
            <person name="Canto-Canche B."/>
            <person name="Churchill A.C.L."/>
            <person name="Conde-Ferraez L."/>
            <person name="Cools H.J."/>
            <person name="Coutinho P.M."/>
            <person name="Csukai M."/>
            <person name="Dehal P."/>
            <person name="De Wit P."/>
            <person name="Donzelli B."/>
            <person name="van de Geest H.C."/>
            <person name="van Ham R.C.H.J."/>
            <person name="Hammond-Kosack K.E."/>
            <person name="Henrissat B."/>
            <person name="Kilian A."/>
            <person name="Kobayashi A.K."/>
            <person name="Koopmann E."/>
            <person name="Kourmpetis Y."/>
            <person name="Kuzniar A."/>
            <person name="Lindquist E."/>
            <person name="Lombard V."/>
            <person name="Maliepaard C."/>
            <person name="Martins N."/>
            <person name="Mehrabi R."/>
            <person name="Nap J.P.H."/>
            <person name="Ponomarenko A."/>
            <person name="Rudd J.J."/>
            <person name="Salamov A."/>
            <person name="Schmutz J."/>
            <person name="Schouten H.J."/>
            <person name="Shapiro H."/>
            <person name="Stergiopoulos I."/>
            <person name="Torriani S.F.F."/>
            <person name="Tu H."/>
            <person name="de Vries R.P."/>
            <person name="Waalwijk C."/>
            <person name="Ware S.B."/>
            <person name="Wiebenga A."/>
            <person name="Zwiers L.-H."/>
            <person name="Oliver R.P."/>
            <person name="Grigoriev I.V."/>
            <person name="Kema G.H.J."/>
        </authorList>
    </citation>
    <scope>NUCLEOTIDE SEQUENCE [LARGE SCALE GENOMIC DNA]</scope>
    <source>
        <strain>CBS 115943 / IPO323</strain>
    </source>
</reference>
<reference key="2">
    <citation type="journal article" date="2017" name="BMC Genomics">
        <title>In silico prediction and characterization of secondary metabolite biosynthetic gene clusters in the wheat pathogen Zymoseptoria tritici.</title>
        <authorList>
            <person name="Cairns T."/>
            <person name="Meyer V."/>
        </authorList>
    </citation>
    <scope>FUNCTION</scope>
</reference>
<evidence type="ECO:0000255" key="1"/>
<evidence type="ECO:0000255" key="2">
    <source>
        <dbReference type="PROSITE-ProRule" id="PRU00434"/>
    </source>
</evidence>
<evidence type="ECO:0000255" key="3">
    <source>
        <dbReference type="PROSITE-ProRule" id="PRU00441"/>
    </source>
</evidence>
<evidence type="ECO:0000255" key="4">
    <source>
        <dbReference type="PROSITE-ProRule" id="PRU00498"/>
    </source>
</evidence>
<evidence type="ECO:0000256" key="5">
    <source>
        <dbReference type="SAM" id="MobiDB-lite"/>
    </source>
</evidence>
<evidence type="ECO:0000303" key="6">
    <source>
    </source>
</evidence>
<evidence type="ECO:0000305" key="7"/>
<evidence type="ECO:0000305" key="8">
    <source>
    </source>
</evidence>
<comment type="function">
    <text evidence="8">Multidrug resistance protein; part of the gene cluster 14 that mediates the biosynthesis of a ferrichrome A-like siderophors which may contribute to organismal virulence.</text>
</comment>
<comment type="subcellular location">
    <subcellularLocation>
        <location evidence="7">Cell membrane</location>
        <topology evidence="1">Multi-pass membrane protein</topology>
    </subcellularLocation>
</comment>
<comment type="similarity">
    <text evidence="7">Belongs to the ABC transporter superfamily. ABCC family. Conjugate transporter (TC 3.A.1.208) subfamily.</text>
</comment>
<protein>
    <recommendedName>
        <fullName evidence="6">ABC-type transporter MYCGRDRAFT_41235</fullName>
    </recommendedName>
    <alternativeName>
        <fullName evidence="7">ATP-binding cassette sub-family C member MYCGRDRAFT_41235</fullName>
    </alternativeName>
    <alternativeName>
        <fullName evidence="6">Ferrichrome A-like siderophore biosynthesis protein MYCGRDRAFT_41235</fullName>
    </alternativeName>
</protein>
<accession>F9X9V4</accession>
<name>FER6_ZYMTI</name>
<proteinExistence type="inferred from homology"/>